<reference key="1">
    <citation type="submission" date="2007-09" db="EMBL/GenBank/DDBJ databases">
        <title>Complete genome sequence of Rickettsia akari.</title>
        <authorList>
            <person name="Madan A."/>
            <person name="Fahey J."/>
            <person name="Helton E."/>
            <person name="Ketteman M."/>
            <person name="Madan A."/>
            <person name="Rodrigues S."/>
            <person name="Sanchez A."/>
            <person name="Whiting M."/>
            <person name="Dasch G."/>
            <person name="Eremeeva M."/>
        </authorList>
    </citation>
    <scope>NUCLEOTIDE SEQUENCE [LARGE SCALE GENOMIC DNA]</scope>
    <source>
        <strain>Hartford</strain>
    </source>
</reference>
<gene>
    <name evidence="1" type="primary">adk</name>
    <name type="ordered locus">A1C_05000</name>
</gene>
<dbReference type="EC" id="2.7.4.3" evidence="1"/>
<dbReference type="EMBL" id="CP000847">
    <property type="protein sequence ID" value="ABV75254.1"/>
    <property type="molecule type" value="Genomic_DNA"/>
</dbReference>
<dbReference type="RefSeq" id="WP_012149884.1">
    <property type="nucleotide sequence ID" value="NC_009881.1"/>
</dbReference>
<dbReference type="SMR" id="A8GPC9"/>
<dbReference type="STRING" id="293614.A1C_05000"/>
<dbReference type="KEGG" id="rak:A1C_05000"/>
<dbReference type="eggNOG" id="COG0563">
    <property type="taxonomic scope" value="Bacteria"/>
</dbReference>
<dbReference type="HOGENOM" id="CLU_032354_1_2_5"/>
<dbReference type="UniPathway" id="UPA00588">
    <property type="reaction ID" value="UER00649"/>
</dbReference>
<dbReference type="Proteomes" id="UP000006830">
    <property type="component" value="Chromosome"/>
</dbReference>
<dbReference type="GO" id="GO:0005737">
    <property type="term" value="C:cytoplasm"/>
    <property type="evidence" value="ECO:0007669"/>
    <property type="project" value="UniProtKB-SubCell"/>
</dbReference>
<dbReference type="GO" id="GO:0004017">
    <property type="term" value="F:adenylate kinase activity"/>
    <property type="evidence" value="ECO:0007669"/>
    <property type="project" value="UniProtKB-UniRule"/>
</dbReference>
<dbReference type="GO" id="GO:0005524">
    <property type="term" value="F:ATP binding"/>
    <property type="evidence" value="ECO:0007669"/>
    <property type="project" value="UniProtKB-UniRule"/>
</dbReference>
<dbReference type="GO" id="GO:0008270">
    <property type="term" value="F:zinc ion binding"/>
    <property type="evidence" value="ECO:0007669"/>
    <property type="project" value="UniProtKB-UniRule"/>
</dbReference>
<dbReference type="GO" id="GO:0044209">
    <property type="term" value="P:AMP salvage"/>
    <property type="evidence" value="ECO:0007669"/>
    <property type="project" value="UniProtKB-UniRule"/>
</dbReference>
<dbReference type="CDD" id="cd01428">
    <property type="entry name" value="ADK"/>
    <property type="match status" value="1"/>
</dbReference>
<dbReference type="Gene3D" id="3.40.50.300">
    <property type="entry name" value="P-loop containing nucleotide triphosphate hydrolases"/>
    <property type="match status" value="1"/>
</dbReference>
<dbReference type="HAMAP" id="MF_00235">
    <property type="entry name" value="Adenylate_kinase_Adk"/>
    <property type="match status" value="1"/>
</dbReference>
<dbReference type="InterPro" id="IPR006259">
    <property type="entry name" value="Adenyl_kin_sub"/>
</dbReference>
<dbReference type="InterPro" id="IPR000850">
    <property type="entry name" value="Adenylat/UMP-CMP_kin"/>
</dbReference>
<dbReference type="InterPro" id="IPR033690">
    <property type="entry name" value="Adenylat_kinase_CS"/>
</dbReference>
<dbReference type="InterPro" id="IPR007862">
    <property type="entry name" value="Adenylate_kinase_lid-dom"/>
</dbReference>
<dbReference type="InterPro" id="IPR027417">
    <property type="entry name" value="P-loop_NTPase"/>
</dbReference>
<dbReference type="NCBIfam" id="TIGR01351">
    <property type="entry name" value="adk"/>
    <property type="match status" value="1"/>
</dbReference>
<dbReference type="NCBIfam" id="NF001383">
    <property type="entry name" value="PRK00279.2-1"/>
    <property type="match status" value="1"/>
</dbReference>
<dbReference type="PANTHER" id="PTHR23359">
    <property type="entry name" value="NUCLEOTIDE KINASE"/>
    <property type="match status" value="1"/>
</dbReference>
<dbReference type="Pfam" id="PF00406">
    <property type="entry name" value="ADK"/>
    <property type="match status" value="1"/>
</dbReference>
<dbReference type="Pfam" id="PF05191">
    <property type="entry name" value="ADK_lid"/>
    <property type="match status" value="1"/>
</dbReference>
<dbReference type="PRINTS" id="PR00094">
    <property type="entry name" value="ADENYLTKNASE"/>
</dbReference>
<dbReference type="SUPFAM" id="SSF52540">
    <property type="entry name" value="P-loop containing nucleoside triphosphate hydrolases"/>
    <property type="match status" value="1"/>
</dbReference>
<dbReference type="PROSITE" id="PS00113">
    <property type="entry name" value="ADENYLATE_KINASE"/>
    <property type="match status" value="1"/>
</dbReference>
<name>KAD_RICAH</name>
<protein>
    <recommendedName>
        <fullName evidence="1">Adenylate kinase</fullName>
        <shortName evidence="1">AK</shortName>
        <ecNumber evidence="1">2.7.4.3</ecNumber>
    </recommendedName>
    <alternativeName>
        <fullName evidence="1">ATP-AMP transphosphorylase</fullName>
    </alternativeName>
    <alternativeName>
        <fullName evidence="1">ATP:AMP phosphotransferase</fullName>
    </alternativeName>
    <alternativeName>
        <fullName evidence="1">Adenylate monophosphate kinase</fullName>
    </alternativeName>
</protein>
<sequence>MIVIFLGPPGAGKGTQGKKIAKKIDLPHIALGDIFRTIIKTSTSEAELINNYVKQGELVPNAIVNQVIKNFLLSSAYKNGYILDGYPRNLEQAKFFESFIKEKIKIIYFDVSDELLIKRVLGRYSCKNCRKIYNSYFLQPKTDNVCDVCGSSTFDYRKDDNEEVVKKRIEVYKTETYPLIDYYKNSGNFYLVNGSKNEQEIEIDIQKILKIN</sequence>
<comment type="function">
    <text evidence="1">Catalyzes the reversible transfer of the terminal phosphate group between ATP and AMP. Plays an important role in cellular energy homeostasis and in adenine nucleotide metabolism.</text>
</comment>
<comment type="catalytic activity">
    <reaction evidence="1">
        <text>AMP + ATP = 2 ADP</text>
        <dbReference type="Rhea" id="RHEA:12973"/>
        <dbReference type="ChEBI" id="CHEBI:30616"/>
        <dbReference type="ChEBI" id="CHEBI:456215"/>
        <dbReference type="ChEBI" id="CHEBI:456216"/>
        <dbReference type="EC" id="2.7.4.3"/>
    </reaction>
</comment>
<comment type="pathway">
    <text evidence="1">Purine metabolism; AMP biosynthesis via salvage pathway; AMP from ADP: step 1/1.</text>
</comment>
<comment type="subunit">
    <text evidence="1">Monomer.</text>
</comment>
<comment type="subcellular location">
    <subcellularLocation>
        <location evidence="1">Cytoplasm</location>
    </subcellularLocation>
</comment>
<comment type="domain">
    <text evidence="1">Consists of three domains, a large central CORE domain and two small peripheral domains, NMPbind and LID, which undergo movements during catalysis. The LID domain closes over the site of phosphoryl transfer upon ATP binding. Assembling and dissambling the active center during each catalytic cycle provides an effective means to prevent ATP hydrolysis. Some bacteria have evolved a zinc-coordinating structure that stabilizes the LID domain.</text>
</comment>
<comment type="similarity">
    <text evidence="1">Belongs to the adenylate kinase family.</text>
</comment>
<feature type="chain" id="PRO_1000021765" description="Adenylate kinase">
    <location>
        <begin position="1"/>
        <end position="212"/>
    </location>
</feature>
<feature type="region of interest" description="NMP" evidence="1">
    <location>
        <begin position="30"/>
        <end position="59"/>
    </location>
</feature>
<feature type="region of interest" description="LID" evidence="1">
    <location>
        <begin position="122"/>
        <end position="160"/>
    </location>
</feature>
<feature type="binding site" evidence="1">
    <location>
        <begin position="10"/>
        <end position="15"/>
    </location>
    <ligand>
        <name>ATP</name>
        <dbReference type="ChEBI" id="CHEBI:30616"/>
    </ligand>
</feature>
<feature type="binding site" evidence="1">
    <location>
        <position position="36"/>
    </location>
    <ligand>
        <name>AMP</name>
        <dbReference type="ChEBI" id="CHEBI:456215"/>
    </ligand>
</feature>
<feature type="binding site" evidence="1">
    <location>
        <begin position="57"/>
        <end position="59"/>
    </location>
    <ligand>
        <name>AMP</name>
        <dbReference type="ChEBI" id="CHEBI:456215"/>
    </ligand>
</feature>
<feature type="binding site" evidence="1">
    <location>
        <begin position="85"/>
        <end position="88"/>
    </location>
    <ligand>
        <name>AMP</name>
        <dbReference type="ChEBI" id="CHEBI:456215"/>
    </ligand>
</feature>
<feature type="binding site" evidence="1">
    <location>
        <position position="92"/>
    </location>
    <ligand>
        <name>AMP</name>
        <dbReference type="ChEBI" id="CHEBI:456215"/>
    </ligand>
</feature>
<feature type="binding site" evidence="1">
    <location>
        <position position="123"/>
    </location>
    <ligand>
        <name>ATP</name>
        <dbReference type="ChEBI" id="CHEBI:30616"/>
    </ligand>
</feature>
<feature type="binding site" evidence="1">
    <location>
        <position position="126"/>
    </location>
    <ligand>
        <name>Zn(2+)</name>
        <dbReference type="ChEBI" id="CHEBI:29105"/>
        <note>structural</note>
    </ligand>
</feature>
<feature type="binding site" evidence="1">
    <location>
        <position position="129"/>
    </location>
    <ligand>
        <name>Zn(2+)</name>
        <dbReference type="ChEBI" id="CHEBI:29105"/>
        <note>structural</note>
    </ligand>
</feature>
<feature type="binding site" evidence="1">
    <location>
        <begin position="132"/>
        <end position="133"/>
    </location>
    <ligand>
        <name>ATP</name>
        <dbReference type="ChEBI" id="CHEBI:30616"/>
    </ligand>
</feature>
<feature type="binding site" evidence="1">
    <location>
        <position position="146"/>
    </location>
    <ligand>
        <name>Zn(2+)</name>
        <dbReference type="ChEBI" id="CHEBI:29105"/>
        <note>structural</note>
    </ligand>
</feature>
<feature type="binding site" evidence="1">
    <location>
        <position position="149"/>
    </location>
    <ligand>
        <name>Zn(2+)</name>
        <dbReference type="ChEBI" id="CHEBI:29105"/>
        <note>structural</note>
    </ligand>
</feature>
<feature type="binding site" evidence="1">
    <location>
        <position position="157"/>
    </location>
    <ligand>
        <name>AMP</name>
        <dbReference type="ChEBI" id="CHEBI:456215"/>
    </ligand>
</feature>
<feature type="binding site" evidence="1">
    <location>
        <position position="168"/>
    </location>
    <ligand>
        <name>AMP</name>
        <dbReference type="ChEBI" id="CHEBI:456215"/>
    </ligand>
</feature>
<feature type="binding site" evidence="1">
    <location>
        <position position="196"/>
    </location>
    <ligand>
        <name>ATP</name>
        <dbReference type="ChEBI" id="CHEBI:30616"/>
    </ligand>
</feature>
<proteinExistence type="inferred from homology"/>
<evidence type="ECO:0000255" key="1">
    <source>
        <dbReference type="HAMAP-Rule" id="MF_00235"/>
    </source>
</evidence>
<accession>A8GPC9</accession>
<keyword id="KW-0067">ATP-binding</keyword>
<keyword id="KW-0963">Cytoplasm</keyword>
<keyword id="KW-0418">Kinase</keyword>
<keyword id="KW-0479">Metal-binding</keyword>
<keyword id="KW-0545">Nucleotide biosynthesis</keyword>
<keyword id="KW-0547">Nucleotide-binding</keyword>
<keyword id="KW-0808">Transferase</keyword>
<keyword id="KW-0862">Zinc</keyword>
<organism>
    <name type="scientific">Rickettsia akari (strain Hartford)</name>
    <dbReference type="NCBI Taxonomy" id="293614"/>
    <lineage>
        <taxon>Bacteria</taxon>
        <taxon>Pseudomonadati</taxon>
        <taxon>Pseudomonadota</taxon>
        <taxon>Alphaproteobacteria</taxon>
        <taxon>Rickettsiales</taxon>
        <taxon>Rickettsiaceae</taxon>
        <taxon>Rickettsieae</taxon>
        <taxon>Rickettsia</taxon>
        <taxon>spotted fever group</taxon>
    </lineage>
</organism>